<name>VKTH2_BUNCA</name>
<feature type="chain" id="PRO_0000155430" description="Kunitz-type serine protease inhibitor homolog T1-2 B chain">
    <location>
        <begin position="1"/>
        <end position="15" status="greater than"/>
    </location>
</feature>
<feature type="domain" description="BPTI/Kunitz inhibitor" evidence="1">
    <location>
        <begin position="1"/>
        <end position="15" status="greater than"/>
    </location>
</feature>
<feature type="non-terminal residue" evidence="3">
    <location>
        <position position="15"/>
    </location>
</feature>
<reference evidence="4" key="1">
    <citation type="journal article" date="2003" name="J. Biochem.">
        <title>Isolation, toxicity and amino terminal sequences of three major neurotoxins in the venom of Malayan krait (Bungarus candidus) from Thailand.</title>
        <authorList>
            <person name="Khow O."/>
            <person name="Chanhome L."/>
            <person name="Omori-Satoh T."/>
            <person name="Ogawa Y."/>
            <person name="Yanoshita R."/>
            <person name="Samejima Y."/>
            <person name="Kuch U."/>
            <person name="Mebs D."/>
            <person name="Sitprija V."/>
        </authorList>
    </citation>
    <scope>PROTEIN SEQUENCE</scope>
    <scope>FUNCTION</scope>
    <scope>SUBUNIT</scope>
    <scope>SUBCELLULAR LOCATION</scope>
    <scope>TISSUE SPECIFICITY</scope>
    <scope>TOXIC DOSE</scope>
    <source>
        <tissue evidence="2">Venom</tissue>
    </source>
</reference>
<dbReference type="GO" id="GO:0005576">
    <property type="term" value="C:extracellular region"/>
    <property type="evidence" value="ECO:0007669"/>
    <property type="project" value="UniProtKB-SubCell"/>
</dbReference>
<dbReference type="GO" id="GO:0090729">
    <property type="term" value="F:toxin activity"/>
    <property type="evidence" value="ECO:0007669"/>
    <property type="project" value="UniProtKB-KW"/>
</dbReference>
<organism>
    <name type="scientific">Bungarus candidus</name>
    <name type="common">Malayan krait</name>
    <dbReference type="NCBI Taxonomy" id="92438"/>
    <lineage>
        <taxon>Eukaryota</taxon>
        <taxon>Metazoa</taxon>
        <taxon>Chordata</taxon>
        <taxon>Craniata</taxon>
        <taxon>Vertebrata</taxon>
        <taxon>Euteleostomi</taxon>
        <taxon>Lepidosauria</taxon>
        <taxon>Squamata</taxon>
        <taxon>Bifurcata</taxon>
        <taxon>Unidentata</taxon>
        <taxon>Episquamata</taxon>
        <taxon>Toxicofera</taxon>
        <taxon>Serpentes</taxon>
        <taxon>Colubroidea</taxon>
        <taxon>Elapidae</taxon>
        <taxon>Bungarinae</taxon>
        <taxon>Bungarus</taxon>
    </lineage>
</organism>
<accession>P84473</accession>
<keyword id="KW-0903">Direct protein sequencing</keyword>
<keyword id="KW-1015">Disulfide bond</keyword>
<keyword id="KW-0528">Neurotoxin</keyword>
<keyword id="KW-0638">Presynaptic neurotoxin</keyword>
<keyword id="KW-0964">Secreted</keyword>
<keyword id="KW-0800">Toxin</keyword>
<protein>
    <recommendedName>
        <fullName>Kunitz-type serine protease inhibitor homolog T1-2 B chain</fullName>
    </recommendedName>
    <alternativeName>
        <fullName>Neurotoxin T1-2 B chain</fullName>
    </alternativeName>
</protein>
<comment type="function">
    <text evidence="2">Neurotoxin T1-2 is a presynaptic neurotoxin of the venom that exhibits indirect hemolytic activity against human erythrocytes. The B chain is homologous to venom basic protease inhibitors but has no protease inhibitor activity and is non-toxic.</text>
</comment>
<comment type="subunit">
    <text evidence="2">Heterodimer; disulfide-linked. The A chains have phospholipase A2 activity and the B chains show homology with the basic protease inhibitors.</text>
</comment>
<comment type="subcellular location">
    <subcellularLocation>
        <location evidence="2">Secreted</location>
    </subcellularLocation>
</comment>
<comment type="tissue specificity">
    <text evidence="2">Expressed by the venom gland.</text>
</comment>
<comment type="toxic dose">
    <text evidence="2">LD(50) is 0.22 mg/kg by intravenous injection in mice.</text>
</comment>
<comment type="similarity">
    <text evidence="4">Belongs to the venom Kunitz-type family.</text>
</comment>
<sequence length="15" mass="1736">RQRHPDCDKPPDTGN</sequence>
<proteinExistence type="evidence at protein level"/>
<evidence type="ECO:0000255" key="1">
    <source>
        <dbReference type="PROSITE-ProRule" id="PRU00031"/>
    </source>
</evidence>
<evidence type="ECO:0000269" key="2">
    <source>
    </source>
</evidence>
<evidence type="ECO:0000303" key="3">
    <source>
    </source>
</evidence>
<evidence type="ECO:0000305" key="4"/>